<accession>Q9AXU4</accession>
<evidence type="ECO:0000250" key="1">
    <source>
        <dbReference type="UniProtKB" id="P04968"/>
    </source>
</evidence>
<evidence type="ECO:0000255" key="2"/>
<evidence type="ECO:0000255" key="3">
    <source>
        <dbReference type="PROSITE-ProRule" id="PRU01008"/>
    </source>
</evidence>
<evidence type="ECO:0000269" key="4">
    <source>
    </source>
</evidence>
<evidence type="ECO:0000269" key="5">
    <source>
    </source>
</evidence>
<evidence type="ECO:0000303" key="6">
    <source>
    </source>
</evidence>
<evidence type="ECO:0000305" key="7"/>
<evidence type="ECO:0000312" key="8">
    <source>
        <dbReference type="EMBL" id="AAG59585.1"/>
    </source>
</evidence>
<evidence type="ECO:0000312" key="9">
    <source>
        <dbReference type="EMBL" id="OIT01433.1"/>
    </source>
</evidence>
<gene>
    <name evidence="6" type="primary">TD</name>
    <name evidence="8" type="synonym">THD1</name>
    <name evidence="9" type="ORF">A4A49_00426</name>
</gene>
<name>TD_NICAT</name>
<organism>
    <name type="scientific">Nicotiana attenuata</name>
    <name type="common">Coyote tobacco</name>
    <dbReference type="NCBI Taxonomy" id="49451"/>
    <lineage>
        <taxon>Eukaryota</taxon>
        <taxon>Viridiplantae</taxon>
        <taxon>Streptophyta</taxon>
        <taxon>Embryophyta</taxon>
        <taxon>Tracheophyta</taxon>
        <taxon>Spermatophyta</taxon>
        <taxon>Magnoliopsida</taxon>
        <taxon>eudicotyledons</taxon>
        <taxon>Gunneridae</taxon>
        <taxon>Pentapetalae</taxon>
        <taxon>asterids</taxon>
        <taxon>lamiids</taxon>
        <taxon>Solanales</taxon>
        <taxon>Solanaceae</taxon>
        <taxon>Nicotianoideae</taxon>
        <taxon>Nicotianeae</taxon>
        <taxon>Nicotiana</taxon>
    </lineage>
</organism>
<keyword id="KW-0028">Amino-acid biosynthesis</keyword>
<keyword id="KW-0100">Branched-chain amino acid biosynthesis</keyword>
<keyword id="KW-0150">Chloroplast</keyword>
<keyword id="KW-0412">Isoleucine biosynthesis</keyword>
<keyword id="KW-0456">Lyase</keyword>
<keyword id="KW-0611">Plant defense</keyword>
<keyword id="KW-0934">Plastid</keyword>
<keyword id="KW-0663">Pyridoxal phosphate</keyword>
<keyword id="KW-1185">Reference proteome</keyword>
<keyword id="KW-0677">Repeat</keyword>
<keyword id="KW-0809">Transit peptide</keyword>
<protein>
    <recommendedName>
        <fullName evidence="7">Threonine dehydratase</fullName>
        <ecNumber evidence="5">4.3.1.19</ecNumber>
    </recommendedName>
    <alternativeName>
        <fullName evidence="6">Threonine deaminase</fullName>
    </alternativeName>
</protein>
<comment type="function">
    <text evidence="5">Catalyzes the conversion of threonine to alpha-keto butyrate in isoleucine (Ile) biosynthesis (PubMed:17085687). Required for JA-Ile biosynthesis, a signaling molecule involved in defense and resistance to the herbivore Manduca sexta caterpillars (PubMed:17085687).</text>
</comment>
<comment type="catalytic activity">
    <reaction evidence="5">
        <text>L-threonine = 2-oxobutanoate + NH4(+)</text>
        <dbReference type="Rhea" id="RHEA:22108"/>
        <dbReference type="ChEBI" id="CHEBI:16763"/>
        <dbReference type="ChEBI" id="CHEBI:28938"/>
        <dbReference type="ChEBI" id="CHEBI:57926"/>
        <dbReference type="EC" id="4.3.1.19"/>
    </reaction>
</comment>
<comment type="cofactor">
    <cofactor evidence="1">
        <name>pyridoxal 5'-phosphate</name>
        <dbReference type="ChEBI" id="CHEBI:597326"/>
    </cofactor>
</comment>
<comment type="pathway">
    <text evidence="7">Amino-acid biosynthesis; L-isoleucine biosynthesis; 2-oxobutanoate from L-threonine: step 1/1.</text>
</comment>
<comment type="subcellular location">
    <subcellularLocation>
        <location evidence="2">Plastid</location>
        <location evidence="2">Chloroplast</location>
    </subcellularLocation>
</comment>
<comment type="induction">
    <text evidence="4">Induced by methyl jasmonate and feeding with the herbivore Manduca sexta caterpillars.</text>
</comment>
<comment type="miscellaneous">
    <text evidence="5">Plants silencing TD exhibit a stunt growth phenotype.</text>
</comment>
<comment type="similarity">
    <text evidence="7">Belongs to the serine/threonine dehydratase family.</text>
</comment>
<proteinExistence type="evidence at protein level"/>
<feature type="transit peptide" description="Chloroplast" evidence="2">
    <location>
        <begin position="1"/>
        <end position="51"/>
    </location>
</feature>
<feature type="chain" id="PRO_0000446308" description="Threonine dehydratase" evidence="2">
    <location>
        <begin position="52"/>
        <end position="601"/>
    </location>
</feature>
<feature type="domain" description="ACT-like 1" evidence="3">
    <location>
        <begin position="427"/>
        <end position="499"/>
    </location>
</feature>
<feature type="domain" description="ACT-like 2" evidence="3">
    <location>
        <begin position="521"/>
        <end position="592"/>
    </location>
</feature>
<reference key="1">
    <citation type="journal article" date="2001" name="Plant Physiol.">
        <title>Molecular interactions between the specialist herbivore Manduca sexta (Lepidoptera, Sphingidae) and its natural host Nicotiana attenuata. I. Large-scale changes in the accumulation of growth- and defense-related plant mRNAs.</title>
        <authorList>
            <person name="Hermsmeier D."/>
            <person name="Schittko U."/>
            <person name="Baldwin I.T."/>
        </authorList>
    </citation>
    <scope>NUCLEOTIDE SEQUENCE [MRNA]</scope>
    <scope>INDUCTION</scope>
</reference>
<reference key="2">
    <citation type="journal article" date="2006" name="Plant Sci.">
        <title>Isolation and characterization of the threonine deaminase promoter in Nicotiana attenuata.</title>
        <authorList>
            <person name="Kang J.-H."/>
            <person name="Baldwin I.T."/>
        </authorList>
        <dbReference type="AGRICOLA" id="IND43833696"/>
    </citation>
    <scope>NUCLEOTIDE SEQUENCE [GENOMIC DNA]</scope>
</reference>
<reference key="3">
    <citation type="journal article" date="2017" name="Proc. Natl. Acad. Sci. U.S.A.">
        <title>Wild tobacco genomes reveal the evolution of nicotine biosynthesis.</title>
        <authorList>
            <person name="Xu S."/>
            <person name="Brockmoeller T."/>
            <person name="Navarro-Quezada A."/>
            <person name="Kuhl H."/>
            <person name="Gase K."/>
            <person name="Ling Z."/>
            <person name="Zhou W."/>
            <person name="Kreitzer C."/>
            <person name="Stanke M."/>
            <person name="Tang H."/>
            <person name="Lyons E."/>
            <person name="Pandey P."/>
            <person name="Pandey S.P."/>
            <person name="Timmermann B."/>
            <person name="Gaquerel E."/>
            <person name="Baldwin I.T."/>
        </authorList>
    </citation>
    <scope>NUCLEOTIDE SEQUENCE [LARGE SCALE GENOMIC DNA]</scope>
</reference>
<reference key="4">
    <citation type="journal article" date="2006" name="Plant Cell">
        <title>Silencing threonine deaminase and JAR4 in Nicotiana attenuata impairs jasmonic acid-isoleucine-mediated defenses against Manduca sexta.</title>
        <authorList>
            <person name="Kang J.H."/>
            <person name="Wang L."/>
            <person name="Giri A."/>
            <person name="Baldwin I.T."/>
        </authorList>
    </citation>
    <scope>FUNCTION</scope>
    <scope>CATALYTIC ACTIVITY</scope>
    <scope>INDUCTION</scope>
</reference>
<dbReference type="EC" id="4.3.1.19" evidence="5"/>
<dbReference type="EMBL" id="AF229927">
    <property type="protein sequence ID" value="AAG59585.1"/>
    <property type="molecule type" value="mRNA"/>
</dbReference>
<dbReference type="EMBL" id="AY928105">
    <property type="protein sequence ID" value="AAX22214.1"/>
    <property type="molecule type" value="Genomic_DNA"/>
</dbReference>
<dbReference type="EMBL" id="MJEQ01037189">
    <property type="protein sequence ID" value="OIT01433.1"/>
    <property type="molecule type" value="Genomic_DNA"/>
</dbReference>
<dbReference type="RefSeq" id="XP_019250776.1">
    <property type="nucleotide sequence ID" value="XM_019395231.1"/>
</dbReference>
<dbReference type="SMR" id="Q9AXU4"/>
<dbReference type="STRING" id="49451.Q9AXU4"/>
<dbReference type="EnsemblPlants" id="OIT01433">
    <property type="protein sequence ID" value="OIT01433"/>
    <property type="gene ID" value="A4A49_00426"/>
</dbReference>
<dbReference type="GeneID" id="109229701"/>
<dbReference type="Gramene" id="OIT01433">
    <property type="protein sequence ID" value="OIT01433"/>
    <property type="gene ID" value="A4A49_00426"/>
</dbReference>
<dbReference type="KEGG" id="nau:109229701"/>
<dbReference type="OMA" id="GTEINRQ"/>
<dbReference type="OrthoDB" id="4418812at2759"/>
<dbReference type="BRENDA" id="4.3.1.19">
    <property type="organism ID" value="9729"/>
</dbReference>
<dbReference type="UniPathway" id="UPA00047">
    <property type="reaction ID" value="UER00054"/>
</dbReference>
<dbReference type="Proteomes" id="UP000187609">
    <property type="component" value="Chromosome 7"/>
</dbReference>
<dbReference type="GO" id="GO:0009507">
    <property type="term" value="C:chloroplast"/>
    <property type="evidence" value="ECO:0007669"/>
    <property type="project" value="UniProtKB-SubCell"/>
</dbReference>
<dbReference type="GO" id="GO:0003941">
    <property type="term" value="F:L-serine ammonia-lyase activity"/>
    <property type="evidence" value="ECO:0007669"/>
    <property type="project" value="TreeGrafter"/>
</dbReference>
<dbReference type="GO" id="GO:0030170">
    <property type="term" value="F:pyridoxal phosphate binding"/>
    <property type="evidence" value="ECO:0007669"/>
    <property type="project" value="InterPro"/>
</dbReference>
<dbReference type="GO" id="GO:0004794">
    <property type="term" value="F:threonine deaminase activity"/>
    <property type="evidence" value="ECO:0000314"/>
    <property type="project" value="UniProtKB"/>
</dbReference>
<dbReference type="GO" id="GO:0006952">
    <property type="term" value="P:defense response"/>
    <property type="evidence" value="ECO:0007669"/>
    <property type="project" value="UniProtKB-KW"/>
</dbReference>
<dbReference type="GO" id="GO:0009097">
    <property type="term" value="P:isoleucine biosynthetic process"/>
    <property type="evidence" value="ECO:0007669"/>
    <property type="project" value="UniProtKB-UniPathway"/>
</dbReference>
<dbReference type="GO" id="GO:0006565">
    <property type="term" value="P:L-serine catabolic process"/>
    <property type="evidence" value="ECO:0007669"/>
    <property type="project" value="TreeGrafter"/>
</dbReference>
<dbReference type="GO" id="GO:0006567">
    <property type="term" value="P:threonine catabolic process"/>
    <property type="evidence" value="ECO:0007669"/>
    <property type="project" value="TreeGrafter"/>
</dbReference>
<dbReference type="CDD" id="cd04907">
    <property type="entry name" value="ACT_ThrD-I_2"/>
    <property type="match status" value="1"/>
</dbReference>
<dbReference type="CDD" id="cd01562">
    <property type="entry name" value="Thr-dehyd"/>
    <property type="match status" value="1"/>
</dbReference>
<dbReference type="FunFam" id="3.40.50.1100:FF:000008">
    <property type="entry name" value="L-threonine dehydratase"/>
    <property type="match status" value="1"/>
</dbReference>
<dbReference type="FunFam" id="3.40.1020.10:FF:000003">
    <property type="entry name" value="Threonine dehydratase"/>
    <property type="match status" value="1"/>
</dbReference>
<dbReference type="Gene3D" id="3.40.50.1100">
    <property type="match status" value="2"/>
</dbReference>
<dbReference type="Gene3D" id="3.40.1020.10">
    <property type="entry name" value="Biosynthetic Threonine Deaminase, Domain 3"/>
    <property type="match status" value="1"/>
</dbReference>
<dbReference type="InterPro" id="IPR045865">
    <property type="entry name" value="ACT-like_dom_sf"/>
</dbReference>
<dbReference type="InterPro" id="IPR050147">
    <property type="entry name" value="Ser/Thr_Dehydratase"/>
</dbReference>
<dbReference type="InterPro" id="IPR000634">
    <property type="entry name" value="Ser/Thr_deHydtase_PyrdxlP-BS"/>
</dbReference>
<dbReference type="InterPro" id="IPR001721">
    <property type="entry name" value="TD_ACT-like"/>
</dbReference>
<dbReference type="InterPro" id="IPR038110">
    <property type="entry name" value="TD_ACT-like_sf"/>
</dbReference>
<dbReference type="InterPro" id="IPR005787">
    <property type="entry name" value="Thr_deHydtase_biosynth"/>
</dbReference>
<dbReference type="InterPro" id="IPR001926">
    <property type="entry name" value="TrpB-like_PALP"/>
</dbReference>
<dbReference type="InterPro" id="IPR036052">
    <property type="entry name" value="TrpB-like_PALP_sf"/>
</dbReference>
<dbReference type="NCBIfam" id="TIGR01124">
    <property type="entry name" value="ilvA_2Cterm"/>
    <property type="match status" value="1"/>
</dbReference>
<dbReference type="NCBIfam" id="NF006674">
    <property type="entry name" value="PRK09224.1"/>
    <property type="match status" value="1"/>
</dbReference>
<dbReference type="PANTHER" id="PTHR48078:SF10">
    <property type="entry name" value="THREONINE DEHYDRATASE 2 BIOSYNTHETIC, CHLOROPLASTIC"/>
    <property type="match status" value="1"/>
</dbReference>
<dbReference type="PANTHER" id="PTHR48078">
    <property type="entry name" value="THREONINE DEHYDRATASE, MITOCHONDRIAL-RELATED"/>
    <property type="match status" value="1"/>
</dbReference>
<dbReference type="Pfam" id="PF00291">
    <property type="entry name" value="PALP"/>
    <property type="match status" value="1"/>
</dbReference>
<dbReference type="Pfam" id="PF00585">
    <property type="entry name" value="Thr_dehydrat_C"/>
    <property type="match status" value="2"/>
</dbReference>
<dbReference type="SUPFAM" id="SSF55021">
    <property type="entry name" value="ACT-like"/>
    <property type="match status" value="1"/>
</dbReference>
<dbReference type="SUPFAM" id="SSF53686">
    <property type="entry name" value="Tryptophan synthase beta subunit-like PLP-dependent enzymes"/>
    <property type="match status" value="1"/>
</dbReference>
<dbReference type="PROSITE" id="PS51672">
    <property type="entry name" value="ACT_LIKE"/>
    <property type="match status" value="2"/>
</dbReference>
<dbReference type="PROSITE" id="PS00165">
    <property type="entry name" value="DEHYDRATASE_SER_THR"/>
    <property type="match status" value="1"/>
</dbReference>
<sequence>MEVLCQAPAGNSNFACNPKFTAIRTRAISSNDTFKVISSTGNNKKMKGAIRTSIPKPSALPLKVSQLSPSADSMPVPASLQDVEAGKLIENNPSGGDTEELFQYLVEILASRVYDVAIDSPLQNAAKLSKKLGVNFWIKREDMQSVFSFKLRGAYNMMTKLSKEQLERGVITASAGNHAQGVALGAQRLKCTATIVMPVTTPEIKIEAVKNLDGKVVLHGDTFDKAQEHALKLAEDEGLTFIPPFDHPDVIIGQGTIGTEINRQLKDIHAVFVPVGGGGLIAGVAAYFKRVAPHTKIIGVEPFGASSMTQSLYHGERVKLEQVDNFADGVAVALVGEETFRLCKDLIDGMVLVSNDAISAAVKDVYDEGRNILETSGALAIAGAEAYCKYYNIKGENVVAIASGANMDFSKLKLVVDLADIGGQREALLATFMPEEPGSFKKFCELVGPMNITEFKYRYNSGRKQALVLYSVGVNTKSDLESMLERMKSSQLNTVNLTNNNLVKEHLRHLMGGRSEPSNEIFCQFIFPEKPGALRKFLDAFSPRWNISLFHYREQGELDASVLVGFQVPKGEIEEFRVQANNLGYSYEIESLNEASQLIME</sequence>